<evidence type="ECO:0000255" key="1">
    <source>
        <dbReference type="HAMAP-Rule" id="MF_00303"/>
    </source>
</evidence>
<dbReference type="EC" id="5.2.1.8" evidence="1"/>
<dbReference type="EMBL" id="CP001124">
    <property type="protein sequence ID" value="ACH38290.1"/>
    <property type="molecule type" value="Genomic_DNA"/>
</dbReference>
<dbReference type="RefSeq" id="WP_012529702.1">
    <property type="nucleotide sequence ID" value="NC_011146.1"/>
</dbReference>
<dbReference type="SMR" id="B5EI26"/>
<dbReference type="STRING" id="404380.Gbem_1271"/>
<dbReference type="KEGG" id="gbm:Gbem_1271"/>
<dbReference type="eggNOG" id="COG0544">
    <property type="taxonomic scope" value="Bacteria"/>
</dbReference>
<dbReference type="HOGENOM" id="CLU_033058_3_2_7"/>
<dbReference type="OrthoDB" id="9767721at2"/>
<dbReference type="Proteomes" id="UP000008825">
    <property type="component" value="Chromosome"/>
</dbReference>
<dbReference type="GO" id="GO:0005737">
    <property type="term" value="C:cytoplasm"/>
    <property type="evidence" value="ECO:0007669"/>
    <property type="project" value="UniProtKB-SubCell"/>
</dbReference>
<dbReference type="GO" id="GO:0003755">
    <property type="term" value="F:peptidyl-prolyl cis-trans isomerase activity"/>
    <property type="evidence" value="ECO:0007669"/>
    <property type="project" value="UniProtKB-UniRule"/>
</dbReference>
<dbReference type="GO" id="GO:0044183">
    <property type="term" value="F:protein folding chaperone"/>
    <property type="evidence" value="ECO:0007669"/>
    <property type="project" value="TreeGrafter"/>
</dbReference>
<dbReference type="GO" id="GO:0043022">
    <property type="term" value="F:ribosome binding"/>
    <property type="evidence" value="ECO:0007669"/>
    <property type="project" value="TreeGrafter"/>
</dbReference>
<dbReference type="GO" id="GO:0051083">
    <property type="term" value="P:'de novo' cotranslational protein folding"/>
    <property type="evidence" value="ECO:0007669"/>
    <property type="project" value="TreeGrafter"/>
</dbReference>
<dbReference type="GO" id="GO:0051301">
    <property type="term" value="P:cell division"/>
    <property type="evidence" value="ECO:0007669"/>
    <property type="project" value="UniProtKB-KW"/>
</dbReference>
<dbReference type="GO" id="GO:0061077">
    <property type="term" value="P:chaperone-mediated protein folding"/>
    <property type="evidence" value="ECO:0007669"/>
    <property type="project" value="TreeGrafter"/>
</dbReference>
<dbReference type="GO" id="GO:0015031">
    <property type="term" value="P:protein transport"/>
    <property type="evidence" value="ECO:0007669"/>
    <property type="project" value="UniProtKB-UniRule"/>
</dbReference>
<dbReference type="GO" id="GO:0043335">
    <property type="term" value="P:protein unfolding"/>
    <property type="evidence" value="ECO:0007669"/>
    <property type="project" value="TreeGrafter"/>
</dbReference>
<dbReference type="FunFam" id="3.10.50.40:FF:000001">
    <property type="entry name" value="Trigger factor"/>
    <property type="match status" value="1"/>
</dbReference>
<dbReference type="Gene3D" id="3.10.50.40">
    <property type="match status" value="1"/>
</dbReference>
<dbReference type="Gene3D" id="3.30.70.1050">
    <property type="entry name" value="Trigger factor ribosome-binding domain"/>
    <property type="match status" value="1"/>
</dbReference>
<dbReference type="Gene3D" id="1.10.3120.10">
    <property type="entry name" value="Trigger factor, C-terminal domain"/>
    <property type="match status" value="1"/>
</dbReference>
<dbReference type="HAMAP" id="MF_00303">
    <property type="entry name" value="Trigger_factor_Tig"/>
    <property type="match status" value="1"/>
</dbReference>
<dbReference type="InterPro" id="IPR046357">
    <property type="entry name" value="PPIase_dom_sf"/>
</dbReference>
<dbReference type="InterPro" id="IPR001179">
    <property type="entry name" value="PPIase_FKBP_dom"/>
</dbReference>
<dbReference type="InterPro" id="IPR005215">
    <property type="entry name" value="Trig_fac"/>
</dbReference>
<dbReference type="InterPro" id="IPR008880">
    <property type="entry name" value="Trigger_fac_C"/>
</dbReference>
<dbReference type="InterPro" id="IPR037041">
    <property type="entry name" value="Trigger_fac_C_sf"/>
</dbReference>
<dbReference type="InterPro" id="IPR008881">
    <property type="entry name" value="Trigger_fac_ribosome-bd_bac"/>
</dbReference>
<dbReference type="InterPro" id="IPR036611">
    <property type="entry name" value="Trigger_fac_ribosome-bd_sf"/>
</dbReference>
<dbReference type="InterPro" id="IPR027304">
    <property type="entry name" value="Trigger_fact/SurA_dom_sf"/>
</dbReference>
<dbReference type="NCBIfam" id="TIGR00115">
    <property type="entry name" value="tig"/>
    <property type="match status" value="1"/>
</dbReference>
<dbReference type="PANTHER" id="PTHR30560">
    <property type="entry name" value="TRIGGER FACTOR CHAPERONE AND PEPTIDYL-PROLYL CIS/TRANS ISOMERASE"/>
    <property type="match status" value="1"/>
</dbReference>
<dbReference type="PANTHER" id="PTHR30560:SF3">
    <property type="entry name" value="TRIGGER FACTOR-LIKE PROTEIN TIG, CHLOROPLASTIC"/>
    <property type="match status" value="1"/>
</dbReference>
<dbReference type="Pfam" id="PF00254">
    <property type="entry name" value="FKBP_C"/>
    <property type="match status" value="1"/>
</dbReference>
<dbReference type="Pfam" id="PF05698">
    <property type="entry name" value="Trigger_C"/>
    <property type="match status" value="1"/>
</dbReference>
<dbReference type="Pfam" id="PF05697">
    <property type="entry name" value="Trigger_N"/>
    <property type="match status" value="1"/>
</dbReference>
<dbReference type="PIRSF" id="PIRSF003095">
    <property type="entry name" value="Trigger_factor"/>
    <property type="match status" value="1"/>
</dbReference>
<dbReference type="SUPFAM" id="SSF54534">
    <property type="entry name" value="FKBP-like"/>
    <property type="match status" value="1"/>
</dbReference>
<dbReference type="SUPFAM" id="SSF109998">
    <property type="entry name" value="Triger factor/SurA peptide-binding domain-like"/>
    <property type="match status" value="1"/>
</dbReference>
<dbReference type="SUPFAM" id="SSF102735">
    <property type="entry name" value="Trigger factor ribosome-binding domain"/>
    <property type="match status" value="1"/>
</dbReference>
<dbReference type="PROSITE" id="PS50059">
    <property type="entry name" value="FKBP_PPIASE"/>
    <property type="match status" value="1"/>
</dbReference>
<proteinExistence type="inferred from homology"/>
<protein>
    <recommendedName>
        <fullName evidence="1">Trigger factor</fullName>
        <shortName evidence="1">TF</shortName>
        <ecNumber evidence="1">5.2.1.8</ecNumber>
    </recommendedName>
    <alternativeName>
        <fullName evidence="1">PPIase</fullName>
    </alternativeName>
</protein>
<sequence length="435" mass="48738">MQISVESVNSIKKKLNFEIPADKVSAEVDKAYAEIRKHAAIKGFRKGKVPMSLIEKHYGEKMAEDVVKNLVQESYFSAVSEQGLNPVGYPAIESNPLKKGESFKYSATVEVFPEVEVKDYTGLAVVKEKLEIDDSVVAARLKEMQERMSQLGPAPEGHAAAMGDFVTFDFKGAMDGVYFEGGSAEDFQLELGSGRFIPGFEEQMVGMTVGTNSTIKVNFPEGYGNADLAGKPADFEVSIKEIKVKELPELNDDFAKEFGEEFETLDLLKAKLAEMNEAQEVSRINAELRDRLIKALIEKNELEVPEALVDRQAQMMLESTKQRLASQRLSLEMMGMTDDSYKAQFRDNAREQVKGSLLLDAVAEKEKIEPTEEEFEAQLSVIAEQTRQDLEKVTQLYKTNERAKDNLMAQMREDKAVQFILDRAKVTEVPKAEIK</sequence>
<gene>
    <name evidence="1" type="primary">tig</name>
    <name type="ordered locus">Gbem_1271</name>
</gene>
<comment type="function">
    <text evidence="1">Involved in protein export. Acts as a chaperone by maintaining the newly synthesized protein in an open conformation. Functions as a peptidyl-prolyl cis-trans isomerase.</text>
</comment>
<comment type="catalytic activity">
    <reaction evidence="1">
        <text>[protein]-peptidylproline (omega=180) = [protein]-peptidylproline (omega=0)</text>
        <dbReference type="Rhea" id="RHEA:16237"/>
        <dbReference type="Rhea" id="RHEA-COMP:10747"/>
        <dbReference type="Rhea" id="RHEA-COMP:10748"/>
        <dbReference type="ChEBI" id="CHEBI:83833"/>
        <dbReference type="ChEBI" id="CHEBI:83834"/>
        <dbReference type="EC" id="5.2.1.8"/>
    </reaction>
</comment>
<comment type="subcellular location">
    <subcellularLocation>
        <location>Cytoplasm</location>
    </subcellularLocation>
    <text evidence="1">About half TF is bound to the ribosome near the polypeptide exit tunnel while the other half is free in the cytoplasm.</text>
</comment>
<comment type="domain">
    <text evidence="1">Consists of 3 domains; the N-terminus binds the ribosome, the middle domain has PPIase activity, while the C-terminus has intrinsic chaperone activity on its own.</text>
</comment>
<comment type="similarity">
    <text evidence="1">Belongs to the FKBP-type PPIase family. Tig subfamily.</text>
</comment>
<reference key="1">
    <citation type="submission" date="2008-07" db="EMBL/GenBank/DDBJ databases">
        <title>Complete sequence of Geobacter bemidjiensis BEM.</title>
        <authorList>
            <consortium name="US DOE Joint Genome Institute"/>
            <person name="Lucas S."/>
            <person name="Copeland A."/>
            <person name="Lapidus A."/>
            <person name="Glavina del Rio T."/>
            <person name="Dalin E."/>
            <person name="Tice H."/>
            <person name="Bruce D."/>
            <person name="Goodwin L."/>
            <person name="Pitluck S."/>
            <person name="Kiss H."/>
            <person name="Brettin T."/>
            <person name="Detter J.C."/>
            <person name="Han C."/>
            <person name="Kuske C.R."/>
            <person name="Schmutz J."/>
            <person name="Larimer F."/>
            <person name="Land M."/>
            <person name="Hauser L."/>
            <person name="Kyrpides N."/>
            <person name="Lykidis A."/>
            <person name="Lovley D."/>
            <person name="Richardson P."/>
        </authorList>
    </citation>
    <scope>NUCLEOTIDE SEQUENCE [LARGE SCALE GENOMIC DNA]</scope>
    <source>
        <strain>ATCC BAA-1014 / DSM 16622 / JCM 12645 / Bem</strain>
    </source>
</reference>
<keyword id="KW-0131">Cell cycle</keyword>
<keyword id="KW-0132">Cell division</keyword>
<keyword id="KW-0143">Chaperone</keyword>
<keyword id="KW-0963">Cytoplasm</keyword>
<keyword id="KW-0413">Isomerase</keyword>
<keyword id="KW-1185">Reference proteome</keyword>
<keyword id="KW-0697">Rotamase</keyword>
<organism>
    <name type="scientific">Citrifermentans bemidjiense (strain ATCC BAA-1014 / DSM 16622 / JCM 12645 / Bem)</name>
    <name type="common">Geobacter bemidjiensis</name>
    <dbReference type="NCBI Taxonomy" id="404380"/>
    <lineage>
        <taxon>Bacteria</taxon>
        <taxon>Pseudomonadati</taxon>
        <taxon>Thermodesulfobacteriota</taxon>
        <taxon>Desulfuromonadia</taxon>
        <taxon>Geobacterales</taxon>
        <taxon>Geobacteraceae</taxon>
        <taxon>Citrifermentans</taxon>
    </lineage>
</organism>
<name>TIG_CITBB</name>
<accession>B5EI26</accession>
<feature type="chain" id="PRO_1000115538" description="Trigger factor">
    <location>
        <begin position="1"/>
        <end position="435"/>
    </location>
</feature>
<feature type="domain" description="PPIase FKBP-type" evidence="1">
    <location>
        <begin position="163"/>
        <end position="248"/>
    </location>
</feature>